<comment type="function">
    <text evidence="1">Toxic component of a type II toxin-antitoxin (TA) system. An RNase.</text>
</comment>
<comment type="cofactor">
    <cofactor evidence="1">
        <name>Mg(2+)</name>
        <dbReference type="ChEBI" id="CHEBI:18420"/>
    </cofactor>
</comment>
<comment type="similarity">
    <text evidence="1">Belongs to the PINc/VapC protein family.</text>
</comment>
<name>Y2377_RHIME</name>
<sequence length="142" mass="15105">MSFVDGSVIVAILNEEPGFEELEKRLSDADGKLCVSPLVRFEAVAALTRLRIIATKGKADRSDLIGEARELVDSFIQALSASEVTIDSHTGVRALDAMARYGKVAGHPAALNLGDCFAYAAAKESGLTLIYKGNDFSQTDLG</sequence>
<feature type="chain" id="PRO_0000221205" description="VapC ribonuclease R02377">
    <location>
        <begin position="1"/>
        <end position="142"/>
    </location>
</feature>
<feature type="domain" description="PINc" evidence="1">
    <location>
        <begin position="3"/>
        <end position="140"/>
    </location>
</feature>
<feature type="binding site" evidence="1">
    <location>
        <position position="5"/>
    </location>
    <ligand>
        <name>Mg(2+)</name>
        <dbReference type="ChEBI" id="CHEBI:18420"/>
    </ligand>
</feature>
<feature type="binding site" evidence="1">
    <location>
        <position position="115"/>
    </location>
    <ligand>
        <name>Mg(2+)</name>
        <dbReference type="ChEBI" id="CHEBI:18420"/>
    </ligand>
</feature>
<feature type="sequence conflict" description="In Ref. 1; CAB39979." evidence="2" ref="1">
    <original>G</original>
    <variation>A</variation>
    <location>
        <position position="6"/>
    </location>
</feature>
<dbReference type="EC" id="3.1.-.-" evidence="1"/>
<dbReference type="EMBL" id="AJ132004">
    <property type="protein sequence ID" value="CAB39979.1"/>
    <property type="molecule type" value="Genomic_DNA"/>
</dbReference>
<dbReference type="EMBL" id="AL591688">
    <property type="protein sequence ID" value="CAC46956.1"/>
    <property type="molecule type" value="Genomic_DNA"/>
</dbReference>
<dbReference type="RefSeq" id="NP_386483.1">
    <property type="nucleotide sequence ID" value="NC_003047.1"/>
</dbReference>
<dbReference type="RefSeq" id="WP_010969892.1">
    <property type="nucleotide sequence ID" value="NC_003047.1"/>
</dbReference>
<dbReference type="SMR" id="Q9X7L4"/>
<dbReference type="EnsemblBacteria" id="CAC46956">
    <property type="protein sequence ID" value="CAC46956"/>
    <property type="gene ID" value="SMc02715"/>
</dbReference>
<dbReference type="KEGG" id="sme:SMc02715"/>
<dbReference type="PATRIC" id="fig|266834.11.peg.3860"/>
<dbReference type="eggNOG" id="COG3742">
    <property type="taxonomic scope" value="Bacteria"/>
</dbReference>
<dbReference type="HOGENOM" id="CLU_144760_0_0_5"/>
<dbReference type="OrthoDB" id="32625at2"/>
<dbReference type="Proteomes" id="UP000001976">
    <property type="component" value="Chromosome"/>
</dbReference>
<dbReference type="GO" id="GO:0000287">
    <property type="term" value="F:magnesium ion binding"/>
    <property type="evidence" value="ECO:0007669"/>
    <property type="project" value="UniProtKB-UniRule"/>
</dbReference>
<dbReference type="GO" id="GO:0004540">
    <property type="term" value="F:RNA nuclease activity"/>
    <property type="evidence" value="ECO:0007669"/>
    <property type="project" value="InterPro"/>
</dbReference>
<dbReference type="CDD" id="cd09871">
    <property type="entry name" value="PIN_MtVapC28-VapC30-like"/>
    <property type="match status" value="1"/>
</dbReference>
<dbReference type="Gene3D" id="3.40.50.1010">
    <property type="entry name" value="5'-nuclease"/>
    <property type="match status" value="1"/>
</dbReference>
<dbReference type="HAMAP" id="MF_00265">
    <property type="entry name" value="VapC_Nob1"/>
    <property type="match status" value="1"/>
</dbReference>
<dbReference type="InterPro" id="IPR029060">
    <property type="entry name" value="PIN-like_dom_sf"/>
</dbReference>
<dbReference type="InterPro" id="IPR002716">
    <property type="entry name" value="PIN_dom"/>
</dbReference>
<dbReference type="InterPro" id="IPR022907">
    <property type="entry name" value="VapC_family"/>
</dbReference>
<dbReference type="Pfam" id="PF01850">
    <property type="entry name" value="PIN"/>
    <property type="match status" value="1"/>
</dbReference>
<dbReference type="SUPFAM" id="SSF88723">
    <property type="entry name" value="PIN domain-like"/>
    <property type="match status" value="1"/>
</dbReference>
<accession>Q9X7L4</accession>
<keyword id="KW-0378">Hydrolase</keyword>
<keyword id="KW-0460">Magnesium</keyword>
<keyword id="KW-0479">Metal-binding</keyword>
<keyword id="KW-0540">Nuclease</keyword>
<keyword id="KW-1185">Reference proteome</keyword>
<keyword id="KW-1277">Toxin-antitoxin system</keyword>
<proteinExistence type="inferred from homology"/>
<organism>
    <name type="scientific">Rhizobium meliloti (strain 1021)</name>
    <name type="common">Ensifer meliloti</name>
    <name type="synonym">Sinorhizobium meliloti</name>
    <dbReference type="NCBI Taxonomy" id="266834"/>
    <lineage>
        <taxon>Bacteria</taxon>
        <taxon>Pseudomonadati</taxon>
        <taxon>Pseudomonadota</taxon>
        <taxon>Alphaproteobacteria</taxon>
        <taxon>Hyphomicrobiales</taxon>
        <taxon>Rhizobiaceae</taxon>
        <taxon>Sinorhizobium/Ensifer group</taxon>
        <taxon>Sinorhizobium</taxon>
    </lineage>
</organism>
<evidence type="ECO:0000255" key="1">
    <source>
        <dbReference type="HAMAP-Rule" id="MF_00265"/>
    </source>
</evidence>
<evidence type="ECO:0000305" key="2"/>
<reference key="1">
    <citation type="submission" date="1999-02" db="EMBL/GenBank/DDBJ databases">
        <title>The Rhizobium meliloti leuA gene is essential for symbiosis.</title>
        <authorList>
            <person name="Sanjuan-Pinilla J.M."/>
            <person name="Olivares J."/>
            <person name="Sanjuan J."/>
        </authorList>
    </citation>
    <scope>NUCLEOTIDE SEQUENCE [GENOMIC DNA]</scope>
    <source>
        <strain>GR4</strain>
    </source>
</reference>
<reference key="2">
    <citation type="journal article" date="2001" name="Proc. Natl. Acad. Sci. U.S.A.">
        <title>Analysis of the chromosome sequence of the legume symbiont Sinorhizobium meliloti strain 1021.</title>
        <authorList>
            <person name="Capela D."/>
            <person name="Barloy-Hubler F."/>
            <person name="Gouzy J."/>
            <person name="Bothe G."/>
            <person name="Ampe F."/>
            <person name="Batut J."/>
            <person name="Boistard P."/>
            <person name="Becker A."/>
            <person name="Boutry M."/>
            <person name="Cadieu E."/>
            <person name="Dreano S."/>
            <person name="Gloux S."/>
            <person name="Godrie T."/>
            <person name="Goffeau A."/>
            <person name="Kahn D."/>
            <person name="Kiss E."/>
            <person name="Lelaure V."/>
            <person name="Masuy D."/>
            <person name="Pohl T."/>
            <person name="Portetelle D."/>
            <person name="Puehler A."/>
            <person name="Purnelle B."/>
            <person name="Ramsperger U."/>
            <person name="Renard C."/>
            <person name="Thebault P."/>
            <person name="Vandenbol M."/>
            <person name="Weidner S."/>
            <person name="Galibert F."/>
        </authorList>
    </citation>
    <scope>NUCLEOTIDE SEQUENCE [LARGE SCALE GENOMIC DNA]</scope>
    <source>
        <strain>1021</strain>
    </source>
</reference>
<reference key="3">
    <citation type="journal article" date="2001" name="Science">
        <title>The composite genome of the legume symbiont Sinorhizobium meliloti.</title>
        <authorList>
            <person name="Galibert F."/>
            <person name="Finan T.M."/>
            <person name="Long S.R."/>
            <person name="Puehler A."/>
            <person name="Abola P."/>
            <person name="Ampe F."/>
            <person name="Barloy-Hubler F."/>
            <person name="Barnett M.J."/>
            <person name="Becker A."/>
            <person name="Boistard P."/>
            <person name="Bothe G."/>
            <person name="Boutry M."/>
            <person name="Bowser L."/>
            <person name="Buhrmester J."/>
            <person name="Cadieu E."/>
            <person name="Capela D."/>
            <person name="Chain P."/>
            <person name="Cowie A."/>
            <person name="Davis R.W."/>
            <person name="Dreano S."/>
            <person name="Federspiel N.A."/>
            <person name="Fisher R.F."/>
            <person name="Gloux S."/>
            <person name="Godrie T."/>
            <person name="Goffeau A."/>
            <person name="Golding B."/>
            <person name="Gouzy J."/>
            <person name="Gurjal M."/>
            <person name="Hernandez-Lucas I."/>
            <person name="Hong A."/>
            <person name="Huizar L."/>
            <person name="Hyman R.W."/>
            <person name="Jones T."/>
            <person name="Kahn D."/>
            <person name="Kahn M.L."/>
            <person name="Kalman S."/>
            <person name="Keating D.H."/>
            <person name="Kiss E."/>
            <person name="Komp C."/>
            <person name="Lelaure V."/>
            <person name="Masuy D."/>
            <person name="Palm C."/>
            <person name="Peck M.C."/>
            <person name="Pohl T.M."/>
            <person name="Portetelle D."/>
            <person name="Purnelle B."/>
            <person name="Ramsperger U."/>
            <person name="Surzycki R."/>
            <person name="Thebault P."/>
            <person name="Vandenbol M."/>
            <person name="Vorhoelter F.J."/>
            <person name="Weidner S."/>
            <person name="Wells D.H."/>
            <person name="Wong K."/>
            <person name="Yeh K.-C."/>
            <person name="Batut J."/>
        </authorList>
    </citation>
    <scope>NUCLEOTIDE SEQUENCE [LARGE SCALE GENOMIC DNA]</scope>
    <source>
        <strain>1021</strain>
    </source>
</reference>
<gene>
    <name type="ordered locus">R02377</name>
    <name type="ORF">SMc02715</name>
</gene>
<protein>
    <recommendedName>
        <fullName>VapC ribonuclease R02377</fullName>
        <shortName>RNase R02377</shortName>
        <ecNumber evidence="1">3.1.-.-</ecNumber>
    </recommendedName>
    <alternativeName>
        <fullName>Toxin R02377</fullName>
    </alternativeName>
</protein>